<keyword id="KW-0067">ATP-binding</keyword>
<keyword id="KW-0963">Cytoplasm</keyword>
<keyword id="KW-0227">DNA damage</keyword>
<keyword id="KW-0228">DNA excision</keyword>
<keyword id="KW-0234">DNA repair</keyword>
<keyword id="KW-0267">Excision nuclease</keyword>
<keyword id="KW-0347">Helicase</keyword>
<keyword id="KW-0378">Hydrolase</keyword>
<keyword id="KW-0547">Nucleotide-binding</keyword>
<keyword id="KW-1185">Reference proteome</keyword>
<keyword id="KW-0742">SOS response</keyword>
<proteinExistence type="inferred from homology"/>
<evidence type="ECO:0000255" key="1">
    <source>
        <dbReference type="HAMAP-Rule" id="MF_00204"/>
    </source>
</evidence>
<evidence type="ECO:0000256" key="2">
    <source>
        <dbReference type="SAM" id="MobiDB-lite"/>
    </source>
</evidence>
<feature type="chain" id="PRO_1000200544" description="UvrABC system protein B">
    <location>
        <begin position="1"/>
        <end position="673"/>
    </location>
</feature>
<feature type="domain" description="Helicase ATP-binding" evidence="1">
    <location>
        <begin position="26"/>
        <end position="183"/>
    </location>
</feature>
<feature type="domain" description="Helicase C-terminal" evidence="1">
    <location>
        <begin position="431"/>
        <end position="597"/>
    </location>
</feature>
<feature type="domain" description="UVR" evidence="1">
    <location>
        <begin position="633"/>
        <end position="668"/>
    </location>
</feature>
<feature type="region of interest" description="Disordered" evidence="2">
    <location>
        <begin position="608"/>
        <end position="627"/>
    </location>
</feature>
<feature type="short sequence motif" description="Beta-hairpin">
    <location>
        <begin position="92"/>
        <end position="115"/>
    </location>
</feature>
<feature type="binding site" evidence="1">
    <location>
        <begin position="39"/>
        <end position="46"/>
    </location>
    <ligand>
        <name>ATP</name>
        <dbReference type="ChEBI" id="CHEBI:30616"/>
    </ligand>
</feature>
<dbReference type="EMBL" id="CU928161">
    <property type="protein sequence ID" value="CAR02135.1"/>
    <property type="molecule type" value="Genomic_DNA"/>
</dbReference>
<dbReference type="RefSeq" id="WP_000042533.1">
    <property type="nucleotide sequence ID" value="NC_011742.1"/>
</dbReference>
<dbReference type="SMR" id="B7MGN7"/>
<dbReference type="GeneID" id="93776651"/>
<dbReference type="KEGG" id="ecz:ECS88_0796"/>
<dbReference type="HOGENOM" id="CLU_009621_2_1_6"/>
<dbReference type="Proteomes" id="UP000000747">
    <property type="component" value="Chromosome"/>
</dbReference>
<dbReference type="GO" id="GO:0005737">
    <property type="term" value="C:cytoplasm"/>
    <property type="evidence" value="ECO:0007669"/>
    <property type="project" value="UniProtKB-SubCell"/>
</dbReference>
<dbReference type="GO" id="GO:0009380">
    <property type="term" value="C:excinuclease repair complex"/>
    <property type="evidence" value="ECO:0007669"/>
    <property type="project" value="InterPro"/>
</dbReference>
<dbReference type="GO" id="GO:0005524">
    <property type="term" value="F:ATP binding"/>
    <property type="evidence" value="ECO:0007669"/>
    <property type="project" value="UniProtKB-UniRule"/>
</dbReference>
<dbReference type="GO" id="GO:0016887">
    <property type="term" value="F:ATP hydrolysis activity"/>
    <property type="evidence" value="ECO:0007669"/>
    <property type="project" value="InterPro"/>
</dbReference>
<dbReference type="GO" id="GO:0003677">
    <property type="term" value="F:DNA binding"/>
    <property type="evidence" value="ECO:0007669"/>
    <property type="project" value="UniProtKB-UniRule"/>
</dbReference>
<dbReference type="GO" id="GO:0009381">
    <property type="term" value="F:excinuclease ABC activity"/>
    <property type="evidence" value="ECO:0007669"/>
    <property type="project" value="UniProtKB-UniRule"/>
</dbReference>
<dbReference type="GO" id="GO:0004386">
    <property type="term" value="F:helicase activity"/>
    <property type="evidence" value="ECO:0007669"/>
    <property type="project" value="UniProtKB-KW"/>
</dbReference>
<dbReference type="GO" id="GO:0006289">
    <property type="term" value="P:nucleotide-excision repair"/>
    <property type="evidence" value="ECO:0007669"/>
    <property type="project" value="UniProtKB-UniRule"/>
</dbReference>
<dbReference type="GO" id="GO:0009432">
    <property type="term" value="P:SOS response"/>
    <property type="evidence" value="ECO:0007669"/>
    <property type="project" value="UniProtKB-UniRule"/>
</dbReference>
<dbReference type="CDD" id="cd17916">
    <property type="entry name" value="DEXHc_UvrB"/>
    <property type="match status" value="1"/>
</dbReference>
<dbReference type="CDD" id="cd18790">
    <property type="entry name" value="SF2_C_UvrB"/>
    <property type="match status" value="1"/>
</dbReference>
<dbReference type="FunFam" id="3.40.50.300:FF:000257">
    <property type="entry name" value="UvrABC system protein B"/>
    <property type="match status" value="1"/>
</dbReference>
<dbReference type="FunFam" id="3.40.50.300:FF:000401">
    <property type="entry name" value="UvrABC system protein B"/>
    <property type="match status" value="1"/>
</dbReference>
<dbReference type="FunFam" id="3.40.50.300:FF:000477">
    <property type="entry name" value="UvrABC system protein B"/>
    <property type="match status" value="1"/>
</dbReference>
<dbReference type="Gene3D" id="3.40.50.300">
    <property type="entry name" value="P-loop containing nucleotide triphosphate hydrolases"/>
    <property type="match status" value="3"/>
</dbReference>
<dbReference type="Gene3D" id="4.10.860.10">
    <property type="entry name" value="UVR domain"/>
    <property type="match status" value="1"/>
</dbReference>
<dbReference type="HAMAP" id="MF_00204">
    <property type="entry name" value="UvrB"/>
    <property type="match status" value="1"/>
</dbReference>
<dbReference type="InterPro" id="IPR006935">
    <property type="entry name" value="Helicase/UvrB_N"/>
</dbReference>
<dbReference type="InterPro" id="IPR014001">
    <property type="entry name" value="Helicase_ATP-bd"/>
</dbReference>
<dbReference type="InterPro" id="IPR001650">
    <property type="entry name" value="Helicase_C-like"/>
</dbReference>
<dbReference type="InterPro" id="IPR027417">
    <property type="entry name" value="P-loop_NTPase"/>
</dbReference>
<dbReference type="InterPro" id="IPR001943">
    <property type="entry name" value="UVR_dom"/>
</dbReference>
<dbReference type="InterPro" id="IPR036876">
    <property type="entry name" value="UVR_dom_sf"/>
</dbReference>
<dbReference type="InterPro" id="IPR004807">
    <property type="entry name" value="UvrB"/>
</dbReference>
<dbReference type="InterPro" id="IPR041471">
    <property type="entry name" value="UvrB_inter"/>
</dbReference>
<dbReference type="InterPro" id="IPR024759">
    <property type="entry name" value="UvrB_YAD/RRR_dom"/>
</dbReference>
<dbReference type="NCBIfam" id="NF003673">
    <property type="entry name" value="PRK05298.1"/>
    <property type="match status" value="1"/>
</dbReference>
<dbReference type="NCBIfam" id="TIGR00631">
    <property type="entry name" value="uvrb"/>
    <property type="match status" value="1"/>
</dbReference>
<dbReference type="PANTHER" id="PTHR24029">
    <property type="entry name" value="UVRABC SYSTEM PROTEIN B"/>
    <property type="match status" value="1"/>
</dbReference>
<dbReference type="PANTHER" id="PTHR24029:SF0">
    <property type="entry name" value="UVRABC SYSTEM PROTEIN B"/>
    <property type="match status" value="1"/>
</dbReference>
<dbReference type="Pfam" id="PF00271">
    <property type="entry name" value="Helicase_C"/>
    <property type="match status" value="1"/>
</dbReference>
<dbReference type="Pfam" id="PF04851">
    <property type="entry name" value="ResIII"/>
    <property type="match status" value="1"/>
</dbReference>
<dbReference type="Pfam" id="PF02151">
    <property type="entry name" value="UVR"/>
    <property type="match status" value="1"/>
</dbReference>
<dbReference type="Pfam" id="PF12344">
    <property type="entry name" value="UvrB"/>
    <property type="match status" value="1"/>
</dbReference>
<dbReference type="Pfam" id="PF17757">
    <property type="entry name" value="UvrB_inter"/>
    <property type="match status" value="1"/>
</dbReference>
<dbReference type="SMART" id="SM00487">
    <property type="entry name" value="DEXDc"/>
    <property type="match status" value="1"/>
</dbReference>
<dbReference type="SMART" id="SM00490">
    <property type="entry name" value="HELICc"/>
    <property type="match status" value="1"/>
</dbReference>
<dbReference type="SUPFAM" id="SSF46600">
    <property type="entry name" value="C-terminal UvrC-binding domain of UvrB"/>
    <property type="match status" value="1"/>
</dbReference>
<dbReference type="SUPFAM" id="SSF52540">
    <property type="entry name" value="P-loop containing nucleoside triphosphate hydrolases"/>
    <property type="match status" value="2"/>
</dbReference>
<dbReference type="PROSITE" id="PS51192">
    <property type="entry name" value="HELICASE_ATP_BIND_1"/>
    <property type="match status" value="1"/>
</dbReference>
<dbReference type="PROSITE" id="PS51194">
    <property type="entry name" value="HELICASE_CTER"/>
    <property type="match status" value="1"/>
</dbReference>
<dbReference type="PROSITE" id="PS50151">
    <property type="entry name" value="UVR"/>
    <property type="match status" value="1"/>
</dbReference>
<gene>
    <name evidence="1" type="primary">uvrB</name>
    <name type="ordered locus">ECS88_0796</name>
</gene>
<organism>
    <name type="scientific">Escherichia coli O45:K1 (strain S88 / ExPEC)</name>
    <dbReference type="NCBI Taxonomy" id="585035"/>
    <lineage>
        <taxon>Bacteria</taxon>
        <taxon>Pseudomonadati</taxon>
        <taxon>Pseudomonadota</taxon>
        <taxon>Gammaproteobacteria</taxon>
        <taxon>Enterobacterales</taxon>
        <taxon>Enterobacteriaceae</taxon>
        <taxon>Escherichia</taxon>
    </lineage>
</organism>
<name>UVRB_ECO45</name>
<sequence>MSKPFKLNSAFKPSGDQPEAIRRLEEGLEDGLAHQTLLGVTGSGKTFTIANVIADLQRPTMVLAPNKTLAAQLYGEMKEFFPENAVEYFVSYYDYYQPEAYVPSSDTFIEKDASVNEHIEQMRLSATKAMLERRDVVVVASVSAIYGLGDPDLYLKMMLHLTVGMIIDQRAILRRLAELQYARNDQAFQRGTFRVRGEVIDIFPAESDDIALRVELFDEEVERLSLFDPLTGQIVSTIPRFTIYPKTHYVTPRERIVQAMEEIKEELAARRKVLLENNKLLEEQRLTQRTQFDLEMMNELGYCSGIENYSRFLSGRGPGEPPPTLFDYLPADGLLVVDESHVTIPQIGGMYRGDRARKETLVEYGFRLPSALDNRPLKFEEFEALAPQTIYVSATPGNYELEKSGGDVVDQVVRPTGLLDPIIEVRPVATQVDDLLSEIRQRAAINERVLVTTLTKRMAEDLTEYLEEHGERVRYLHSDIDTVERMEIIRDLRLGEFDVLVGINLLREGLDMPEVSLVAILDADKEGFLRSERSLIQTIGRAARNVNGKAILYGDKITPSMAKAIGETERRREKQQKYNEEHGITPQGLNKKVVDILALGQNIAKTKAKGRGKSRPIVEPDNVPMDMSPKALQQKIHELEGLMMQHAQNLEFEEAAQIRDQLHQLRELFIAAS</sequence>
<reference key="1">
    <citation type="journal article" date="2009" name="PLoS Genet.">
        <title>Organised genome dynamics in the Escherichia coli species results in highly diverse adaptive paths.</title>
        <authorList>
            <person name="Touchon M."/>
            <person name="Hoede C."/>
            <person name="Tenaillon O."/>
            <person name="Barbe V."/>
            <person name="Baeriswyl S."/>
            <person name="Bidet P."/>
            <person name="Bingen E."/>
            <person name="Bonacorsi S."/>
            <person name="Bouchier C."/>
            <person name="Bouvet O."/>
            <person name="Calteau A."/>
            <person name="Chiapello H."/>
            <person name="Clermont O."/>
            <person name="Cruveiller S."/>
            <person name="Danchin A."/>
            <person name="Diard M."/>
            <person name="Dossat C."/>
            <person name="Karoui M.E."/>
            <person name="Frapy E."/>
            <person name="Garry L."/>
            <person name="Ghigo J.M."/>
            <person name="Gilles A.M."/>
            <person name="Johnson J."/>
            <person name="Le Bouguenec C."/>
            <person name="Lescat M."/>
            <person name="Mangenot S."/>
            <person name="Martinez-Jehanne V."/>
            <person name="Matic I."/>
            <person name="Nassif X."/>
            <person name="Oztas S."/>
            <person name="Petit M.A."/>
            <person name="Pichon C."/>
            <person name="Rouy Z."/>
            <person name="Ruf C.S."/>
            <person name="Schneider D."/>
            <person name="Tourret J."/>
            <person name="Vacherie B."/>
            <person name="Vallenet D."/>
            <person name="Medigue C."/>
            <person name="Rocha E.P.C."/>
            <person name="Denamur E."/>
        </authorList>
    </citation>
    <scope>NUCLEOTIDE SEQUENCE [LARGE SCALE GENOMIC DNA]</scope>
    <source>
        <strain>S88 / ExPEC</strain>
    </source>
</reference>
<comment type="function">
    <text evidence="1">The UvrABC repair system catalyzes the recognition and processing of DNA lesions. A damage recognition complex composed of 2 UvrA and 2 UvrB subunits scans DNA for abnormalities. Upon binding of the UvrA(2)B(2) complex to a putative damaged site, the DNA wraps around one UvrB monomer. DNA wrap is dependent on ATP binding by UvrB and probably causes local melting of the DNA helix, facilitating insertion of UvrB beta-hairpin between the DNA strands. Then UvrB probes one DNA strand for the presence of a lesion. If a lesion is found the UvrA subunits dissociate and the UvrB-DNA preincision complex is formed. This complex is subsequently bound by UvrC and the second UvrB is released. If no lesion is found, the DNA wraps around the other UvrB subunit that will check the other stand for damage.</text>
</comment>
<comment type="subunit">
    <text evidence="1">Forms a heterotetramer with UvrA during the search for lesions. Interacts with UvrC in an incision complex.</text>
</comment>
<comment type="subcellular location">
    <subcellularLocation>
        <location evidence="1">Cytoplasm</location>
    </subcellularLocation>
</comment>
<comment type="domain">
    <text evidence="1">The beta-hairpin motif is involved in DNA binding.</text>
</comment>
<comment type="similarity">
    <text evidence="1">Belongs to the UvrB family.</text>
</comment>
<protein>
    <recommendedName>
        <fullName evidence="1">UvrABC system protein B</fullName>
        <shortName evidence="1">Protein UvrB</shortName>
    </recommendedName>
    <alternativeName>
        <fullName evidence="1">Excinuclease ABC subunit B</fullName>
    </alternativeName>
</protein>
<accession>B7MGN7</accession>